<gene>
    <name evidence="1" type="primary">truA</name>
    <name type="ordered locus">lpg1302</name>
</gene>
<organism>
    <name type="scientific">Legionella pneumophila subsp. pneumophila (strain Philadelphia 1 / ATCC 33152 / DSM 7513)</name>
    <dbReference type="NCBI Taxonomy" id="272624"/>
    <lineage>
        <taxon>Bacteria</taxon>
        <taxon>Pseudomonadati</taxon>
        <taxon>Pseudomonadota</taxon>
        <taxon>Gammaproteobacteria</taxon>
        <taxon>Legionellales</taxon>
        <taxon>Legionellaceae</taxon>
        <taxon>Legionella</taxon>
    </lineage>
</organism>
<proteinExistence type="inferred from homology"/>
<dbReference type="EC" id="5.4.99.12" evidence="1"/>
<dbReference type="EMBL" id="AE017354">
    <property type="protein sequence ID" value="AAU27385.1"/>
    <property type="molecule type" value="Genomic_DNA"/>
</dbReference>
<dbReference type="RefSeq" id="WP_010947033.1">
    <property type="nucleotide sequence ID" value="NC_002942.5"/>
</dbReference>
<dbReference type="RefSeq" id="YP_095332.1">
    <property type="nucleotide sequence ID" value="NC_002942.5"/>
</dbReference>
<dbReference type="SMR" id="Q5ZVY6"/>
<dbReference type="STRING" id="272624.lpg1302"/>
<dbReference type="PaxDb" id="272624-lpg1302"/>
<dbReference type="GeneID" id="57035295"/>
<dbReference type="KEGG" id="lpn:lpg1302"/>
<dbReference type="PATRIC" id="fig|272624.6.peg.1372"/>
<dbReference type="eggNOG" id="COG0101">
    <property type="taxonomic scope" value="Bacteria"/>
</dbReference>
<dbReference type="HOGENOM" id="CLU_014673_0_2_6"/>
<dbReference type="OrthoDB" id="9811823at2"/>
<dbReference type="Proteomes" id="UP000000609">
    <property type="component" value="Chromosome"/>
</dbReference>
<dbReference type="GO" id="GO:0003723">
    <property type="term" value="F:RNA binding"/>
    <property type="evidence" value="ECO:0007669"/>
    <property type="project" value="InterPro"/>
</dbReference>
<dbReference type="GO" id="GO:0160147">
    <property type="term" value="F:tRNA pseudouridine(38-40) synthase activity"/>
    <property type="evidence" value="ECO:0007669"/>
    <property type="project" value="UniProtKB-EC"/>
</dbReference>
<dbReference type="GO" id="GO:0031119">
    <property type="term" value="P:tRNA pseudouridine synthesis"/>
    <property type="evidence" value="ECO:0007669"/>
    <property type="project" value="UniProtKB-UniRule"/>
</dbReference>
<dbReference type="CDD" id="cd02570">
    <property type="entry name" value="PseudoU_synth_EcTruA"/>
    <property type="match status" value="1"/>
</dbReference>
<dbReference type="FunFam" id="3.30.70.580:FF:000001">
    <property type="entry name" value="tRNA pseudouridine synthase A"/>
    <property type="match status" value="1"/>
</dbReference>
<dbReference type="Gene3D" id="3.30.70.660">
    <property type="entry name" value="Pseudouridine synthase I, catalytic domain, C-terminal subdomain"/>
    <property type="match status" value="1"/>
</dbReference>
<dbReference type="Gene3D" id="3.30.70.580">
    <property type="entry name" value="Pseudouridine synthase I, catalytic domain, N-terminal subdomain"/>
    <property type="match status" value="1"/>
</dbReference>
<dbReference type="HAMAP" id="MF_00171">
    <property type="entry name" value="TruA"/>
    <property type="match status" value="1"/>
</dbReference>
<dbReference type="InterPro" id="IPR020103">
    <property type="entry name" value="PsdUridine_synth_cat_dom_sf"/>
</dbReference>
<dbReference type="InterPro" id="IPR001406">
    <property type="entry name" value="PsdUridine_synth_TruA"/>
</dbReference>
<dbReference type="InterPro" id="IPR020097">
    <property type="entry name" value="PsdUridine_synth_TruA_a/b_dom"/>
</dbReference>
<dbReference type="InterPro" id="IPR020095">
    <property type="entry name" value="PsdUridine_synth_TruA_C"/>
</dbReference>
<dbReference type="InterPro" id="IPR020094">
    <property type="entry name" value="TruA/RsuA/RluB/E/F_N"/>
</dbReference>
<dbReference type="NCBIfam" id="TIGR00071">
    <property type="entry name" value="hisT_truA"/>
    <property type="match status" value="1"/>
</dbReference>
<dbReference type="PANTHER" id="PTHR11142">
    <property type="entry name" value="PSEUDOURIDYLATE SYNTHASE"/>
    <property type="match status" value="1"/>
</dbReference>
<dbReference type="PANTHER" id="PTHR11142:SF0">
    <property type="entry name" value="TRNA PSEUDOURIDINE SYNTHASE-LIKE 1"/>
    <property type="match status" value="1"/>
</dbReference>
<dbReference type="Pfam" id="PF01416">
    <property type="entry name" value="PseudoU_synth_1"/>
    <property type="match status" value="2"/>
</dbReference>
<dbReference type="PIRSF" id="PIRSF001430">
    <property type="entry name" value="tRNA_psdUrid_synth"/>
    <property type="match status" value="1"/>
</dbReference>
<dbReference type="SUPFAM" id="SSF55120">
    <property type="entry name" value="Pseudouridine synthase"/>
    <property type="match status" value="1"/>
</dbReference>
<sequence>MRIALVVEYDGSQYHGWQAQTGLHTIQQAVEFALSKVADSSISVVCAGRTDTGVHATNQVIHFDCEKDRSIRAWIHGANTFLPKDICVKWGKEMPENFHARYSAVSRRYRYVIYNGAIRPGLLRGNVTWQYRQLDHRLMQQGGQCLLGENDFTSFRSVECQSNTPMRNIHQLQVTRHGDLVVLDITANAFLHHMVRNIAGVLIAVGSGKHPVGWVKDVLNAKDRKLGAETAPSYGLYLVQVTYPKEFGLLQNNPGPLFLWEK</sequence>
<reference key="1">
    <citation type="journal article" date="2004" name="Science">
        <title>The genomic sequence of the accidental pathogen Legionella pneumophila.</title>
        <authorList>
            <person name="Chien M."/>
            <person name="Morozova I."/>
            <person name="Shi S."/>
            <person name="Sheng H."/>
            <person name="Chen J."/>
            <person name="Gomez S.M."/>
            <person name="Asamani G."/>
            <person name="Hill K."/>
            <person name="Nuara J."/>
            <person name="Feder M."/>
            <person name="Rineer J."/>
            <person name="Greenberg J.J."/>
            <person name="Steshenko V."/>
            <person name="Park S.H."/>
            <person name="Zhao B."/>
            <person name="Teplitskaya E."/>
            <person name="Edwards J.R."/>
            <person name="Pampou S."/>
            <person name="Georghiou A."/>
            <person name="Chou I.-C."/>
            <person name="Iannuccilli W."/>
            <person name="Ulz M.E."/>
            <person name="Kim D.H."/>
            <person name="Geringer-Sameth A."/>
            <person name="Goldsberry C."/>
            <person name="Morozov P."/>
            <person name="Fischer S.G."/>
            <person name="Segal G."/>
            <person name="Qu X."/>
            <person name="Rzhetsky A."/>
            <person name="Zhang P."/>
            <person name="Cayanis E."/>
            <person name="De Jong P.J."/>
            <person name="Ju J."/>
            <person name="Kalachikov S."/>
            <person name="Shuman H.A."/>
            <person name="Russo J.J."/>
        </authorList>
    </citation>
    <scope>NUCLEOTIDE SEQUENCE [LARGE SCALE GENOMIC DNA]</scope>
    <source>
        <strain>Philadelphia 1 / ATCC 33152 / DSM 7513</strain>
    </source>
</reference>
<comment type="function">
    <text evidence="1">Formation of pseudouridine at positions 38, 39 and 40 in the anticodon stem and loop of transfer RNAs.</text>
</comment>
<comment type="catalytic activity">
    <reaction evidence="1">
        <text>uridine(38/39/40) in tRNA = pseudouridine(38/39/40) in tRNA</text>
        <dbReference type="Rhea" id="RHEA:22376"/>
        <dbReference type="Rhea" id="RHEA-COMP:10085"/>
        <dbReference type="Rhea" id="RHEA-COMP:10087"/>
        <dbReference type="ChEBI" id="CHEBI:65314"/>
        <dbReference type="ChEBI" id="CHEBI:65315"/>
        <dbReference type="EC" id="5.4.99.12"/>
    </reaction>
</comment>
<comment type="subunit">
    <text evidence="1">Homodimer.</text>
</comment>
<comment type="similarity">
    <text evidence="1">Belongs to the tRNA pseudouridine synthase TruA family.</text>
</comment>
<name>TRUA_LEGPH</name>
<evidence type="ECO:0000255" key="1">
    <source>
        <dbReference type="HAMAP-Rule" id="MF_00171"/>
    </source>
</evidence>
<accession>Q5ZVY6</accession>
<keyword id="KW-0413">Isomerase</keyword>
<keyword id="KW-1185">Reference proteome</keyword>
<keyword id="KW-0819">tRNA processing</keyword>
<feature type="chain" id="PRO_0000057398" description="tRNA pseudouridine synthase A">
    <location>
        <begin position="1"/>
        <end position="262"/>
    </location>
</feature>
<feature type="active site" description="Nucleophile" evidence="1">
    <location>
        <position position="51"/>
    </location>
</feature>
<feature type="binding site" evidence="1">
    <location>
        <position position="109"/>
    </location>
    <ligand>
        <name>substrate</name>
    </ligand>
</feature>
<protein>
    <recommendedName>
        <fullName evidence="1">tRNA pseudouridine synthase A</fullName>
        <ecNumber evidence="1">5.4.99.12</ecNumber>
    </recommendedName>
    <alternativeName>
        <fullName evidence="1">tRNA pseudouridine(38-40) synthase</fullName>
    </alternativeName>
    <alternativeName>
        <fullName evidence="1">tRNA pseudouridylate synthase I</fullName>
    </alternativeName>
    <alternativeName>
        <fullName evidence="1">tRNA-uridine isomerase I</fullName>
    </alternativeName>
</protein>